<reference key="1">
    <citation type="journal article" date="2002" name="Nature">
        <title>The genome sequence of Schizosaccharomyces pombe.</title>
        <authorList>
            <person name="Wood V."/>
            <person name="Gwilliam R."/>
            <person name="Rajandream M.A."/>
            <person name="Lyne M.H."/>
            <person name="Lyne R."/>
            <person name="Stewart A."/>
            <person name="Sgouros J.G."/>
            <person name="Peat N."/>
            <person name="Hayles J."/>
            <person name="Baker S.G."/>
            <person name="Basham D."/>
            <person name="Bowman S."/>
            <person name="Brooks K."/>
            <person name="Brown D."/>
            <person name="Brown S."/>
            <person name="Chillingworth T."/>
            <person name="Churcher C.M."/>
            <person name="Collins M."/>
            <person name="Connor R."/>
            <person name="Cronin A."/>
            <person name="Davis P."/>
            <person name="Feltwell T."/>
            <person name="Fraser A."/>
            <person name="Gentles S."/>
            <person name="Goble A."/>
            <person name="Hamlin N."/>
            <person name="Harris D.E."/>
            <person name="Hidalgo J."/>
            <person name="Hodgson G."/>
            <person name="Holroyd S."/>
            <person name="Hornsby T."/>
            <person name="Howarth S."/>
            <person name="Huckle E.J."/>
            <person name="Hunt S."/>
            <person name="Jagels K."/>
            <person name="James K.D."/>
            <person name="Jones L."/>
            <person name="Jones M."/>
            <person name="Leather S."/>
            <person name="McDonald S."/>
            <person name="McLean J."/>
            <person name="Mooney P."/>
            <person name="Moule S."/>
            <person name="Mungall K.L."/>
            <person name="Murphy L.D."/>
            <person name="Niblett D."/>
            <person name="Odell C."/>
            <person name="Oliver K."/>
            <person name="O'Neil S."/>
            <person name="Pearson D."/>
            <person name="Quail M.A."/>
            <person name="Rabbinowitsch E."/>
            <person name="Rutherford K.M."/>
            <person name="Rutter S."/>
            <person name="Saunders D."/>
            <person name="Seeger K."/>
            <person name="Sharp S."/>
            <person name="Skelton J."/>
            <person name="Simmonds M.N."/>
            <person name="Squares R."/>
            <person name="Squares S."/>
            <person name="Stevens K."/>
            <person name="Taylor K."/>
            <person name="Taylor R.G."/>
            <person name="Tivey A."/>
            <person name="Walsh S.V."/>
            <person name="Warren T."/>
            <person name="Whitehead S."/>
            <person name="Woodward J.R."/>
            <person name="Volckaert G."/>
            <person name="Aert R."/>
            <person name="Robben J."/>
            <person name="Grymonprez B."/>
            <person name="Weltjens I."/>
            <person name="Vanstreels E."/>
            <person name="Rieger M."/>
            <person name="Schaefer M."/>
            <person name="Mueller-Auer S."/>
            <person name="Gabel C."/>
            <person name="Fuchs M."/>
            <person name="Duesterhoeft A."/>
            <person name="Fritzc C."/>
            <person name="Holzer E."/>
            <person name="Moestl D."/>
            <person name="Hilbert H."/>
            <person name="Borzym K."/>
            <person name="Langer I."/>
            <person name="Beck A."/>
            <person name="Lehrach H."/>
            <person name="Reinhardt R."/>
            <person name="Pohl T.M."/>
            <person name="Eger P."/>
            <person name="Zimmermann W."/>
            <person name="Wedler H."/>
            <person name="Wambutt R."/>
            <person name="Purnelle B."/>
            <person name="Goffeau A."/>
            <person name="Cadieu E."/>
            <person name="Dreano S."/>
            <person name="Gloux S."/>
            <person name="Lelaure V."/>
            <person name="Mottier S."/>
            <person name="Galibert F."/>
            <person name="Aves S.J."/>
            <person name="Xiang Z."/>
            <person name="Hunt C."/>
            <person name="Moore K."/>
            <person name="Hurst S.M."/>
            <person name="Lucas M."/>
            <person name="Rochet M."/>
            <person name="Gaillardin C."/>
            <person name="Tallada V.A."/>
            <person name="Garzon A."/>
            <person name="Thode G."/>
            <person name="Daga R.R."/>
            <person name="Cruzado L."/>
            <person name="Jimenez J."/>
            <person name="Sanchez M."/>
            <person name="del Rey F."/>
            <person name="Benito J."/>
            <person name="Dominguez A."/>
            <person name="Revuelta J.L."/>
            <person name="Moreno S."/>
            <person name="Armstrong J."/>
            <person name="Forsburg S.L."/>
            <person name="Cerutti L."/>
            <person name="Lowe T."/>
            <person name="McCombie W.R."/>
            <person name="Paulsen I."/>
            <person name="Potashkin J."/>
            <person name="Shpakovski G.V."/>
            <person name="Ussery D."/>
            <person name="Barrell B.G."/>
            <person name="Nurse P."/>
        </authorList>
    </citation>
    <scope>NUCLEOTIDE SEQUENCE [LARGE SCALE GENOMIC DNA]</scope>
    <source>
        <strain>972 / ATCC 24843</strain>
    </source>
</reference>
<reference key="2">
    <citation type="journal article" date="2002" name="Curr. Biol.">
        <title>CDK phosphorylation of Drc1 regulates DNA replication in fission yeast.</title>
        <authorList>
            <person name="Noguchi E."/>
            <person name="Shanahan P."/>
            <person name="Noguchi C."/>
            <person name="Russell P."/>
        </authorList>
    </citation>
    <scope>FUNCTION</scope>
    <scope>INTERACTION WITH RAD4</scope>
    <scope>SUBCELLULAR LOCATION</scope>
    <scope>PHOSPHORYLATION AT THR-60; THR-74; SER-87; THR-99 AND THR-154</scope>
    <scope>MUTAGENESIS OF THR-60; THR-74; SER-87; THR-99 AND THR-154</scope>
</reference>
<reference key="3">
    <citation type="journal article" date="2006" name="Nat. Biotechnol.">
        <title>ORFeome cloning and global analysis of protein localization in the fission yeast Schizosaccharomyces pombe.</title>
        <authorList>
            <person name="Matsuyama A."/>
            <person name="Arai R."/>
            <person name="Yashiroda Y."/>
            <person name="Shirai A."/>
            <person name="Kamata A."/>
            <person name="Sekido S."/>
            <person name="Kobayashi Y."/>
            <person name="Hashimoto A."/>
            <person name="Hamamoto M."/>
            <person name="Hiraoka Y."/>
            <person name="Horinouchi S."/>
            <person name="Yoshida M."/>
        </authorList>
    </citation>
    <scope>SUBCELLULAR LOCATION [LARGE SCALE ANALYSIS]</scope>
</reference>
<reference key="4">
    <citation type="journal article" date="2008" name="J. Proteome Res.">
        <title>Phosphoproteome analysis of fission yeast.</title>
        <authorList>
            <person name="Wilson-Grady J.T."/>
            <person name="Villen J."/>
            <person name="Gygi S.P."/>
        </authorList>
    </citation>
    <scope>PHOSPHORYLATION [LARGE SCALE ANALYSIS] AT SER-183</scope>
    <scope>IDENTIFICATION BY MASS SPECTROMETRY</scope>
</reference>
<sequence>MHDESRTKQISSIKALLKKWEHEYVHTNNCKPSKEDVKKQPEIALLYKQYYELKRESSITPKKAKTKVDFKFQTPTKQRAETEANESPKAPRNDYLQVTPKTVDKSLLGPTPQLSRRVLNLLEDMSPIADSHVDQISDIKHNTSEISSTMIPTTPSKNPEPVAQHTPTVLETPSSYRLQVYTSPNLLRVNAPCRKSLSEMLRELKDIEDDYGSNEEKILQEFESFSSSSSESLVDRDISQPMKKKIKRQNRLVKLPPSMNLSKSHLEGLPEIDEDAENGIDDNEDTTASKDSSPFLDLQSERQNKKIMRNGLVIGKQVSQNYSSYKLKKRKFRRHRS</sequence>
<protein>
    <recommendedName>
        <fullName>DNA replication regulator sld2</fullName>
    </recommendedName>
    <alternativeName>
        <fullName>DNA replication and checkpoint protein 1</fullName>
    </alternativeName>
</protein>
<comment type="function">
    <text evidence="2">Has a role in the initiation of DNA replication. Required at S-phase checkpoint.</text>
</comment>
<comment type="subunit">
    <text evidence="2">Interacts with rad4.</text>
</comment>
<comment type="subcellular location">
    <subcellularLocation>
        <location>Cytoplasm</location>
    </subcellularLocation>
    <subcellularLocation>
        <location>Nucleus</location>
    </subcellularLocation>
</comment>
<comment type="PTM">
    <text evidence="2 3">Phosphorylated by cdc2 at the onset of S-phase.</text>
</comment>
<comment type="similarity">
    <text evidence="4">Belongs to the SLD2 family.</text>
</comment>
<feature type="chain" id="PRO_0000116666" description="DNA replication regulator sld2">
    <location>
        <begin position="1"/>
        <end position="337"/>
    </location>
</feature>
<feature type="region of interest" description="Disordered" evidence="1">
    <location>
        <begin position="71"/>
        <end position="97"/>
    </location>
</feature>
<feature type="region of interest" description="Disordered" evidence="1">
    <location>
        <begin position="258"/>
        <end position="302"/>
    </location>
</feature>
<feature type="compositionally biased region" description="Acidic residues" evidence="1">
    <location>
        <begin position="270"/>
        <end position="285"/>
    </location>
</feature>
<feature type="modified residue" description="Phosphothreonine; by cdc2" evidence="2">
    <location>
        <position position="60"/>
    </location>
</feature>
<feature type="modified residue" description="Phosphothreonine; by cdc2" evidence="2">
    <location>
        <position position="74"/>
    </location>
</feature>
<feature type="modified residue" description="Phosphoserine; by cdc2" evidence="2">
    <location>
        <position position="87"/>
    </location>
</feature>
<feature type="modified residue" description="Phosphothreonine; by cdc2" evidence="2">
    <location>
        <position position="99"/>
    </location>
</feature>
<feature type="modified residue" description="Phosphothreonine; by cdc2" evidence="2">
    <location>
        <position position="154"/>
    </location>
</feature>
<feature type="modified residue" description="Phosphoserine" evidence="3">
    <location>
        <position position="183"/>
    </location>
</feature>
<feature type="mutagenesis site" description="Decrease in phosphorylation by cdc2; no interaction with rad4." evidence="2">
    <original>T</original>
    <variation>A</variation>
    <location>
        <position position="60"/>
    </location>
</feature>
<feature type="mutagenesis site" description="Decrease in phosphorylation by cdc2; no interaction with rad4." evidence="2">
    <original>T</original>
    <variation>A</variation>
    <location>
        <position position="74"/>
    </location>
</feature>
<feature type="mutagenesis site" description="Decrease in phosphorylation by cdc2; no interaction with rad4." evidence="2">
    <original>S</original>
    <variation>A</variation>
    <location>
        <position position="87"/>
    </location>
</feature>
<feature type="mutagenesis site" description="Decrease in phosphorylation by cdc2; no interaction with rad4." evidence="2">
    <original>T</original>
    <variation>A</variation>
    <location>
        <position position="99"/>
    </location>
</feature>
<feature type="mutagenesis site" description="Decrease in phosphorylation by cdc2; no interaction with rad4." evidence="2">
    <original>T</original>
    <variation>A</variation>
    <location>
        <position position="154"/>
    </location>
</feature>
<gene>
    <name type="primary">drc1</name>
    <name type="synonym">sld2</name>
    <name type="ORF">SPAC6B12.11</name>
</gene>
<name>SLD2_SCHPO</name>
<evidence type="ECO:0000256" key="1">
    <source>
        <dbReference type="SAM" id="MobiDB-lite"/>
    </source>
</evidence>
<evidence type="ECO:0000269" key="2">
    <source>
    </source>
</evidence>
<evidence type="ECO:0000269" key="3">
    <source>
    </source>
</evidence>
<evidence type="ECO:0000305" key="4"/>
<organism>
    <name type="scientific">Schizosaccharomyces pombe (strain 972 / ATCC 24843)</name>
    <name type="common">Fission yeast</name>
    <dbReference type="NCBI Taxonomy" id="284812"/>
    <lineage>
        <taxon>Eukaryota</taxon>
        <taxon>Fungi</taxon>
        <taxon>Dikarya</taxon>
        <taxon>Ascomycota</taxon>
        <taxon>Taphrinomycotina</taxon>
        <taxon>Schizosaccharomycetes</taxon>
        <taxon>Schizosaccharomycetales</taxon>
        <taxon>Schizosaccharomycetaceae</taxon>
        <taxon>Schizosaccharomyces</taxon>
    </lineage>
</organism>
<accession>O14216</accession>
<proteinExistence type="evidence at protein level"/>
<dbReference type="EMBL" id="CU329670">
    <property type="protein sequence ID" value="CAB11071.1"/>
    <property type="molecule type" value="Genomic_DNA"/>
</dbReference>
<dbReference type="PIR" id="T39018">
    <property type="entry name" value="T39018"/>
</dbReference>
<dbReference type="RefSeq" id="NP_593766.1">
    <property type="nucleotide sequence ID" value="NM_001019196.2"/>
</dbReference>
<dbReference type="SMR" id="O14216"/>
<dbReference type="BioGRID" id="279734">
    <property type="interactions" value="12"/>
</dbReference>
<dbReference type="FunCoup" id="O14216">
    <property type="interactions" value="11"/>
</dbReference>
<dbReference type="IntAct" id="O14216">
    <property type="interactions" value="1"/>
</dbReference>
<dbReference type="MINT" id="O14216"/>
<dbReference type="STRING" id="284812.O14216"/>
<dbReference type="iPTMnet" id="O14216"/>
<dbReference type="PaxDb" id="4896-SPAC6B12.11.1"/>
<dbReference type="EnsemblFungi" id="SPAC6B12.11.1">
    <property type="protein sequence ID" value="SPAC6B12.11.1:pep"/>
    <property type="gene ID" value="SPAC6B12.11"/>
</dbReference>
<dbReference type="GeneID" id="2543310"/>
<dbReference type="KEGG" id="spo:2543310"/>
<dbReference type="PomBase" id="SPAC6B12.11">
    <property type="gene designation" value="drc1"/>
</dbReference>
<dbReference type="VEuPathDB" id="FungiDB:SPAC6B12.11"/>
<dbReference type="HOGENOM" id="CLU_824276_0_0_1"/>
<dbReference type="InParanoid" id="O14216"/>
<dbReference type="OMA" id="WEHEFSH"/>
<dbReference type="PhylomeDB" id="O14216"/>
<dbReference type="PRO" id="PR:O14216"/>
<dbReference type="Proteomes" id="UP000002485">
    <property type="component" value="Chromosome I"/>
</dbReference>
<dbReference type="GO" id="GO:0005737">
    <property type="term" value="C:cytoplasm"/>
    <property type="evidence" value="ECO:0007669"/>
    <property type="project" value="UniProtKB-SubCell"/>
</dbReference>
<dbReference type="GO" id="GO:0031261">
    <property type="term" value="C:DNA replication preinitiation complex"/>
    <property type="evidence" value="ECO:0000318"/>
    <property type="project" value="GO_Central"/>
</dbReference>
<dbReference type="GO" id="GO:0043596">
    <property type="term" value="C:nuclear replication fork"/>
    <property type="evidence" value="ECO:0000266"/>
    <property type="project" value="PomBase"/>
</dbReference>
<dbReference type="GO" id="GO:0005634">
    <property type="term" value="C:nucleus"/>
    <property type="evidence" value="ECO:0000314"/>
    <property type="project" value="PomBase"/>
</dbReference>
<dbReference type="GO" id="GO:0003688">
    <property type="term" value="F:DNA replication origin binding"/>
    <property type="evidence" value="ECO:0000318"/>
    <property type="project" value="GO_Central"/>
</dbReference>
<dbReference type="GO" id="GO:0003697">
    <property type="term" value="F:single-stranded DNA binding"/>
    <property type="evidence" value="ECO:0000318"/>
    <property type="project" value="GO_Central"/>
</dbReference>
<dbReference type="GO" id="GO:0006270">
    <property type="term" value="P:DNA replication initiation"/>
    <property type="evidence" value="ECO:0000318"/>
    <property type="project" value="GO_Central"/>
</dbReference>
<dbReference type="GO" id="GO:0000727">
    <property type="term" value="P:double-strand break repair via break-induced replication"/>
    <property type="evidence" value="ECO:0000318"/>
    <property type="project" value="GO_Central"/>
</dbReference>
<dbReference type="GO" id="GO:1902975">
    <property type="term" value="P:mitotic DNA replication initiation"/>
    <property type="evidence" value="ECO:0000269"/>
    <property type="project" value="PomBase"/>
</dbReference>
<dbReference type="GO" id="GO:1902977">
    <property type="term" value="P:mitotic DNA replication preinitiation complex assembly"/>
    <property type="evidence" value="ECO:0000315"/>
    <property type="project" value="PomBase"/>
</dbReference>
<dbReference type="CDD" id="cd22289">
    <property type="entry name" value="RecQL4_SLD2_NTD"/>
    <property type="match status" value="1"/>
</dbReference>
<dbReference type="FunFam" id="1.10.10.1460:FF:000001">
    <property type="entry name" value="DNA replication regulator Sld2"/>
    <property type="match status" value="1"/>
</dbReference>
<dbReference type="Gene3D" id="1.10.10.1460">
    <property type="match status" value="1"/>
</dbReference>
<dbReference type="InterPro" id="IPR021110">
    <property type="entry name" value="DNA_rep_checkpnt_protein"/>
</dbReference>
<dbReference type="InterPro" id="IPR040203">
    <property type="entry name" value="Sld2"/>
</dbReference>
<dbReference type="PANTHER" id="PTHR28124">
    <property type="entry name" value="DNA REPLICATION REGULATOR SLD2"/>
    <property type="match status" value="1"/>
</dbReference>
<dbReference type="PANTHER" id="PTHR28124:SF1">
    <property type="entry name" value="DNA REPLICATION REGULATOR SLD2"/>
    <property type="match status" value="1"/>
</dbReference>
<dbReference type="Pfam" id="PF11719">
    <property type="entry name" value="Drc1-Sld2"/>
    <property type="match status" value="1"/>
</dbReference>
<keyword id="KW-0131">Cell cycle</keyword>
<keyword id="KW-0963">Cytoplasm</keyword>
<keyword id="KW-0235">DNA replication</keyword>
<keyword id="KW-0539">Nucleus</keyword>
<keyword id="KW-0597">Phosphoprotein</keyword>
<keyword id="KW-1185">Reference proteome</keyword>